<feature type="transit peptide" description="Mitochondrion" evidence="2">
    <location>
        <begin position="1"/>
        <end position="17"/>
    </location>
</feature>
<feature type="chain" id="PRO_0000456816" description="3-hydroxyacyl-[acyl-carrier-protein] dehydratase, mitochondrial" evidence="2">
    <location>
        <begin position="18"/>
        <end position="166"/>
    </location>
</feature>
<feature type="domain" description="MaoC-like" evidence="2">
    <location>
        <begin position="34"/>
        <end position="125"/>
    </location>
</feature>
<keyword id="KW-0276">Fatty acid metabolism</keyword>
<keyword id="KW-0443">Lipid metabolism</keyword>
<keyword id="KW-0456">Lyase</keyword>
<keyword id="KW-0496">Mitochondrion</keyword>
<keyword id="KW-1185">Reference proteome</keyword>
<keyword id="KW-0809">Transit peptide</keyword>
<proteinExistence type="evidence at protein level"/>
<accession>Q9FJI2</accession>
<comment type="function">
    <text evidence="3">3-hydroxyl-[acyl-carrier-protein] (3-hydroxyl-ACP) dehydratase required for mitochondrial fatty acid synthesis (mtFAS) (PubMed:28202596). MtFAS are essential for photorespiration and plant development, probably by influencing mitochondrial membrane lipid composition and other lipid metabolic pathways (PubMed:28202596).</text>
</comment>
<comment type="catalytic activity">
    <reaction evidence="3">
        <text>a (3R)-hydroxyacyl-[ACP] = a (2E)-enoyl-[ACP] + H2O</text>
        <dbReference type="Rhea" id="RHEA:13097"/>
        <dbReference type="Rhea" id="RHEA-COMP:9925"/>
        <dbReference type="Rhea" id="RHEA-COMP:9945"/>
        <dbReference type="ChEBI" id="CHEBI:15377"/>
        <dbReference type="ChEBI" id="CHEBI:78784"/>
        <dbReference type="ChEBI" id="CHEBI:78827"/>
        <dbReference type="EC" id="4.2.1.59"/>
    </reaction>
    <physiologicalReaction direction="left-to-right" evidence="5">
        <dbReference type="Rhea" id="RHEA:13098"/>
    </physiologicalReaction>
</comment>
<comment type="catalytic activity">
    <reaction evidence="3">
        <text>(3R)-hydroxyhexadecanoyl-[ACP] = (2E)-hexadecenoyl-[ACP] + H2O</text>
        <dbReference type="Rhea" id="RHEA:41908"/>
        <dbReference type="Rhea" id="RHEA-COMP:9650"/>
        <dbReference type="Rhea" id="RHEA-COMP:9651"/>
        <dbReference type="ChEBI" id="CHEBI:15377"/>
        <dbReference type="ChEBI" id="CHEBI:78480"/>
        <dbReference type="ChEBI" id="CHEBI:78481"/>
    </reaction>
    <physiologicalReaction direction="left-to-right" evidence="5">
        <dbReference type="Rhea" id="RHEA:41909"/>
    </physiologicalReaction>
</comment>
<comment type="catalytic activity">
    <reaction evidence="3">
        <text>(3R)-hydroxydecanoyl-[ACP] = (2E)-decenoyl-[ACP] + H2O</text>
        <dbReference type="Rhea" id="RHEA:41860"/>
        <dbReference type="Rhea" id="RHEA-COMP:9638"/>
        <dbReference type="Rhea" id="RHEA-COMP:9639"/>
        <dbReference type="ChEBI" id="CHEBI:15377"/>
        <dbReference type="ChEBI" id="CHEBI:78466"/>
        <dbReference type="ChEBI" id="CHEBI:78467"/>
    </reaction>
    <physiologicalReaction direction="left-to-right" evidence="5">
        <dbReference type="Rhea" id="RHEA:41861"/>
    </physiologicalReaction>
</comment>
<comment type="biophysicochemical properties">
    <kinetics>
        <KM evidence="3">27.8 uM for (2E)-decenoyl-[ACP]</KM>
        <KM evidence="3">32.8 uM for (2E)-hexadecenoyl-[ACP]</KM>
        <Vmax evidence="3">7.9 umol/min/mg enzyme with (2E)-decenoyl-[ACP] as substrate</Vmax>
        <Vmax evidence="3">11.7 umol/min/mg enzyme with (2E)-hexadecenoyl-[ACP] as substrate</Vmax>
    </kinetics>
</comment>
<comment type="pathway">
    <text evidence="3">Lipid metabolism; fatty acid biosynthesis.</text>
</comment>
<comment type="subunit">
    <text evidence="1">Homodimer.</text>
</comment>
<comment type="subcellular location">
    <subcellularLocation>
        <location evidence="3">Mitochondrion</location>
    </subcellularLocation>
</comment>
<comment type="tissue specificity">
    <text evidence="3">Expressed in leaves, roots, siliques and flowers.</text>
</comment>
<comment type="disruption phenotype">
    <text evidence="3">Thicker leaves due to enlarged mesophyll cells when grown in ambient air and associated with altered thylakoid membrane assembly and starch granule ultrastructure (PubMed:28202596). Dwarf plants characterized by reduced lipoylation of lipoylated proteins and altered metabolomes due to reduced catalytic activity of lipoylated enzymes; these phenotypes are partly reversed when grown in 1 percent CO(2) atmosphere (PubMed:28202596). Depleted 3-hydroxytetradecanoic acid levels (PubMed:28202596).</text>
</comment>
<organism>
    <name type="scientific">Arabidopsis thaliana</name>
    <name type="common">Mouse-ear cress</name>
    <dbReference type="NCBI Taxonomy" id="3702"/>
    <lineage>
        <taxon>Eukaryota</taxon>
        <taxon>Viridiplantae</taxon>
        <taxon>Streptophyta</taxon>
        <taxon>Embryophyta</taxon>
        <taxon>Tracheophyta</taxon>
        <taxon>Spermatophyta</taxon>
        <taxon>Magnoliopsida</taxon>
        <taxon>eudicotyledons</taxon>
        <taxon>Gunneridae</taxon>
        <taxon>Pentapetalae</taxon>
        <taxon>rosids</taxon>
        <taxon>malvids</taxon>
        <taxon>Brassicales</taxon>
        <taxon>Brassicaceae</taxon>
        <taxon>Camelineae</taxon>
        <taxon>Arabidopsis</taxon>
    </lineage>
</organism>
<dbReference type="EC" id="4.2.1.59" evidence="3"/>
<dbReference type="EMBL" id="AB015471">
    <property type="protein sequence ID" value="BAB10971.1"/>
    <property type="molecule type" value="Genomic_DNA"/>
</dbReference>
<dbReference type="EMBL" id="CP002688">
    <property type="protein sequence ID" value="AED97310.1"/>
    <property type="molecule type" value="Genomic_DNA"/>
</dbReference>
<dbReference type="EMBL" id="CP002688">
    <property type="protein sequence ID" value="ANM70441.1"/>
    <property type="molecule type" value="Genomic_DNA"/>
</dbReference>
<dbReference type="EMBL" id="CP002688">
    <property type="protein sequence ID" value="ANM70442.1"/>
    <property type="molecule type" value="Genomic_DNA"/>
</dbReference>
<dbReference type="RefSeq" id="NP_001318847.1">
    <property type="nucleotide sequence ID" value="NM_001345408.1"/>
</dbReference>
<dbReference type="RefSeq" id="NP_001332051.1">
    <property type="nucleotide sequence ID" value="NM_001345410.1"/>
</dbReference>
<dbReference type="RefSeq" id="NP_001332052.1">
    <property type="nucleotide sequence ID" value="NM_001345409.1"/>
</dbReference>
<dbReference type="SMR" id="Q9FJI2"/>
<dbReference type="FunCoup" id="Q9FJI2">
    <property type="interactions" value="177"/>
</dbReference>
<dbReference type="STRING" id="3702.Q9FJI2"/>
<dbReference type="PaxDb" id="3702-AT5G60335.1"/>
<dbReference type="ProteomicsDB" id="189474"/>
<dbReference type="EnsemblPlants" id="AT5G60335.1">
    <property type="protein sequence ID" value="AT5G60335.1"/>
    <property type="gene ID" value="AT5G60335"/>
</dbReference>
<dbReference type="EnsemblPlants" id="AT5G60335.2">
    <property type="protein sequence ID" value="AT5G60335.2"/>
    <property type="gene ID" value="AT5G60335"/>
</dbReference>
<dbReference type="EnsemblPlants" id="AT5G60335.3">
    <property type="protein sequence ID" value="AT5G60335.3"/>
    <property type="gene ID" value="AT5G60335"/>
</dbReference>
<dbReference type="GeneID" id="10723110"/>
<dbReference type="Gramene" id="AT5G60335.1">
    <property type="protein sequence ID" value="AT5G60335.1"/>
    <property type="gene ID" value="AT5G60335"/>
</dbReference>
<dbReference type="Gramene" id="AT5G60335.2">
    <property type="protein sequence ID" value="AT5G60335.2"/>
    <property type="gene ID" value="AT5G60335"/>
</dbReference>
<dbReference type="Gramene" id="AT5G60335.3">
    <property type="protein sequence ID" value="AT5G60335.3"/>
    <property type="gene ID" value="AT5G60335"/>
</dbReference>
<dbReference type="KEGG" id="ath:AT5G60335"/>
<dbReference type="Araport" id="AT5G60335"/>
<dbReference type="TAIR" id="AT5G60335">
    <property type="gene designation" value="MTHD"/>
</dbReference>
<dbReference type="eggNOG" id="KOG1206">
    <property type="taxonomic scope" value="Eukaryota"/>
</dbReference>
<dbReference type="HOGENOM" id="CLU_094876_3_1_1"/>
<dbReference type="InParanoid" id="Q9FJI2"/>
<dbReference type="OMA" id="GCVFLHQ"/>
<dbReference type="BRENDA" id="4.2.1.59">
    <property type="organism ID" value="399"/>
</dbReference>
<dbReference type="UniPathway" id="UPA00094"/>
<dbReference type="PRO" id="PR:Q9FJI2"/>
<dbReference type="Proteomes" id="UP000006548">
    <property type="component" value="Chromosome 5"/>
</dbReference>
<dbReference type="ExpressionAtlas" id="Q9FJI2">
    <property type="expression patterns" value="baseline and differential"/>
</dbReference>
<dbReference type="GO" id="GO:0005739">
    <property type="term" value="C:mitochondrion"/>
    <property type="evidence" value="ECO:0000314"/>
    <property type="project" value="TAIR"/>
</dbReference>
<dbReference type="GO" id="GO:0019171">
    <property type="term" value="F:(3R)-hydroxyacyl-[acyl-carrier-protein] dehydratase activity"/>
    <property type="evidence" value="ECO:0000314"/>
    <property type="project" value="TAIR"/>
</dbReference>
<dbReference type="GO" id="GO:0006633">
    <property type="term" value="P:fatty acid biosynthetic process"/>
    <property type="evidence" value="ECO:0000314"/>
    <property type="project" value="TAIR"/>
</dbReference>
<dbReference type="GO" id="GO:0009853">
    <property type="term" value="P:photorespiration"/>
    <property type="evidence" value="ECO:0000315"/>
    <property type="project" value="TAIR"/>
</dbReference>
<dbReference type="GO" id="GO:0010027">
    <property type="term" value="P:thylakoid membrane organization"/>
    <property type="evidence" value="ECO:0000315"/>
    <property type="project" value="TAIR"/>
</dbReference>
<dbReference type="CDD" id="cd03449">
    <property type="entry name" value="R_hydratase"/>
    <property type="match status" value="1"/>
</dbReference>
<dbReference type="FunFam" id="3.10.129.10:FF:000042">
    <property type="entry name" value="MaoC domain protein dehydratase"/>
    <property type="match status" value="1"/>
</dbReference>
<dbReference type="Gene3D" id="3.10.129.10">
    <property type="entry name" value="Hotdog Thioesterase"/>
    <property type="match status" value="1"/>
</dbReference>
<dbReference type="InterPro" id="IPR029069">
    <property type="entry name" value="HotDog_dom_sf"/>
</dbReference>
<dbReference type="InterPro" id="IPR002539">
    <property type="entry name" value="MaoC-like_dom"/>
</dbReference>
<dbReference type="InterPro" id="IPR050965">
    <property type="entry name" value="UPF0336/Enoyl-CoA_hydratase"/>
</dbReference>
<dbReference type="PANTHER" id="PTHR43437:SF3">
    <property type="entry name" value="HYDROXYACYL-THIOESTER DEHYDRATASE TYPE 2, MITOCHONDRIAL"/>
    <property type="match status" value="1"/>
</dbReference>
<dbReference type="PANTHER" id="PTHR43437">
    <property type="entry name" value="HYDROXYACYL-THIOESTER DEHYDRATASE TYPE 2, MITOCHONDRIAL-RELATED"/>
    <property type="match status" value="1"/>
</dbReference>
<dbReference type="Pfam" id="PF01575">
    <property type="entry name" value="MaoC_dehydratas"/>
    <property type="match status" value="1"/>
</dbReference>
<dbReference type="SUPFAM" id="SSF54637">
    <property type="entry name" value="Thioesterase/thiol ester dehydrase-isomerase"/>
    <property type="match status" value="1"/>
</dbReference>
<gene>
    <name evidence="4" type="primary">MTHD</name>
    <name evidence="6" type="ordered locus">At5g60335</name>
    <name evidence="7" type="ORF">K9B18.4</name>
</gene>
<name>MTHD_ARATH</name>
<evidence type="ECO:0000250" key="1">
    <source>
        <dbReference type="UniProtKB" id="O32472"/>
    </source>
</evidence>
<evidence type="ECO:0000255" key="2"/>
<evidence type="ECO:0000269" key="3">
    <source>
    </source>
</evidence>
<evidence type="ECO:0000303" key="4">
    <source>
    </source>
</evidence>
<evidence type="ECO:0000305" key="5">
    <source>
    </source>
</evidence>
<evidence type="ECO:0000312" key="6">
    <source>
        <dbReference type="Araport" id="AT5G60335"/>
    </source>
</evidence>
<evidence type="ECO:0000312" key="7">
    <source>
        <dbReference type="EMBL" id="BAB10971.1"/>
    </source>
</evidence>
<protein>
    <recommendedName>
        <fullName evidence="4">3-hydroxyacyl-[acyl-carrier-protein] dehydratase, mitochondrial</fullName>
        <shortName evidence="4">mtHD</shortName>
        <ecNumber evidence="3">4.2.1.59</ecNumber>
    </recommendedName>
</protein>
<sequence length="166" mass="18576">MLAKTVFPRGLLVLRSFSSVASKTLLKVGDVLRETRVFSSEDIKAYAEVSHDWNPLHFDPESARKAGFENRLVHGMLVSSMFPRIISAHFPGAVYVSQSLHFRSPVYIGDEILGLVQAIALRETKNKYIVKFSTKCFKNHNELVVIDGEATAILPNLDMLQKSPSE</sequence>
<reference key="1">
    <citation type="journal article" date="1998" name="DNA Res.">
        <title>Structural analysis of Arabidopsis thaliana chromosome 5. VII. Sequence features of the regions of 1,013,767 bp covered by sixteen physically assigned P1 and TAC clones.</title>
        <authorList>
            <person name="Nakamura Y."/>
            <person name="Sato S."/>
            <person name="Asamizu E."/>
            <person name="Kaneko T."/>
            <person name="Kotani H."/>
            <person name="Miyajima N."/>
            <person name="Tabata S."/>
        </authorList>
    </citation>
    <scope>NUCLEOTIDE SEQUENCE [LARGE SCALE GENOMIC DNA]</scope>
    <source>
        <strain>cv. Columbia</strain>
    </source>
</reference>
<reference key="2">
    <citation type="journal article" date="2017" name="Plant J.">
        <title>Araport11: a complete reannotation of the Arabidopsis thaliana reference genome.</title>
        <authorList>
            <person name="Cheng C.Y."/>
            <person name="Krishnakumar V."/>
            <person name="Chan A.P."/>
            <person name="Thibaud-Nissen F."/>
            <person name="Schobel S."/>
            <person name="Town C.D."/>
        </authorList>
    </citation>
    <scope>GENOME REANNOTATION</scope>
    <source>
        <strain>cv. Columbia</strain>
    </source>
</reference>
<reference key="3">
    <citation type="journal article" date="2017" name="Plant Physiol.">
        <title>Discovery and characterization of the 3-hydroxyacyl-ACP dehydratase component of the plant mitochondrial fatty acid synthase system.</title>
        <authorList>
            <person name="Guan X."/>
            <person name="Okazaki Y."/>
            <person name="Lithio A."/>
            <person name="Li L."/>
            <person name="Zhao X."/>
            <person name="Jin H."/>
            <person name="Nettleton D."/>
            <person name="Saito K."/>
            <person name="Nikolau B.J."/>
        </authorList>
    </citation>
    <scope>FUNCTION</scope>
    <scope>DISRUPTION PHENOTYPE</scope>
    <scope>CATALYTIC ACTIVITY</scope>
    <scope>SUBCELLULAR LOCATION</scope>
    <scope>PATHWAY</scope>
    <scope>BIOPHYSICOCHEMICAL PROPERTIES</scope>
    <scope>TISSUE SPECIFICITY</scope>
    <source>
        <strain>cv. Columbia</strain>
    </source>
</reference>